<accession>C5BSJ0</accession>
<protein>
    <recommendedName>
        <fullName evidence="1">5-methylthioadenosine/S-adenosylhomocysteine deaminase</fullName>
        <shortName evidence="1">MTA/SAH deaminase</shortName>
        <ecNumber evidence="1">3.5.4.28</ecNumber>
        <ecNumber evidence="1">3.5.4.31</ecNumber>
    </recommendedName>
</protein>
<reference key="1">
    <citation type="journal article" date="2009" name="PLoS ONE">
        <title>The complete genome of Teredinibacter turnerae T7901: an intracellular endosymbiont of marine wood-boring bivalves (shipworms).</title>
        <authorList>
            <person name="Yang J.C."/>
            <person name="Madupu R."/>
            <person name="Durkin A.S."/>
            <person name="Ekborg N.A."/>
            <person name="Pedamallu C.S."/>
            <person name="Hostetler J.B."/>
            <person name="Radune D."/>
            <person name="Toms B.S."/>
            <person name="Henrissat B."/>
            <person name="Coutinho P.M."/>
            <person name="Schwarz S."/>
            <person name="Field L."/>
            <person name="Trindade-Silva A.E."/>
            <person name="Soares C.A.G."/>
            <person name="Elshahawi S."/>
            <person name="Hanora A."/>
            <person name="Schmidt E.W."/>
            <person name="Haygood M.G."/>
            <person name="Posfai J."/>
            <person name="Benner J."/>
            <person name="Madinger C."/>
            <person name="Nove J."/>
            <person name="Anton B."/>
            <person name="Chaudhary K."/>
            <person name="Foster J."/>
            <person name="Holman A."/>
            <person name="Kumar S."/>
            <person name="Lessard P.A."/>
            <person name="Luyten Y.A."/>
            <person name="Slatko B."/>
            <person name="Wood N."/>
            <person name="Wu B."/>
            <person name="Teplitski M."/>
            <person name="Mougous J.D."/>
            <person name="Ward N."/>
            <person name="Eisen J.A."/>
            <person name="Badger J.H."/>
            <person name="Distel D.L."/>
        </authorList>
    </citation>
    <scope>NUCLEOTIDE SEQUENCE [LARGE SCALE GENOMIC DNA]</scope>
    <source>
        <strain>ATCC 39867 / T7901</strain>
    </source>
</reference>
<gene>
    <name evidence="1" type="primary">mtaD</name>
    <name type="ordered locus">TERTU_1381</name>
</gene>
<comment type="function">
    <text evidence="1">Catalyzes the deamination of 5-methylthioadenosine and S-adenosyl-L-homocysteine into 5-methylthioinosine and S-inosyl-L-homocysteine, respectively. Is also able to deaminate adenosine.</text>
</comment>
<comment type="catalytic activity">
    <reaction evidence="1">
        <text>S-adenosyl-L-homocysteine + H2O + H(+) = S-inosyl-L-homocysteine + NH4(+)</text>
        <dbReference type="Rhea" id="RHEA:20716"/>
        <dbReference type="ChEBI" id="CHEBI:15377"/>
        <dbReference type="ChEBI" id="CHEBI:15378"/>
        <dbReference type="ChEBI" id="CHEBI:28938"/>
        <dbReference type="ChEBI" id="CHEBI:57856"/>
        <dbReference type="ChEBI" id="CHEBI:57985"/>
        <dbReference type="EC" id="3.5.4.28"/>
    </reaction>
</comment>
<comment type="catalytic activity">
    <reaction evidence="1">
        <text>S-methyl-5'-thioadenosine + H2O + H(+) = S-methyl-5'-thioinosine + NH4(+)</text>
        <dbReference type="Rhea" id="RHEA:25025"/>
        <dbReference type="ChEBI" id="CHEBI:15377"/>
        <dbReference type="ChEBI" id="CHEBI:15378"/>
        <dbReference type="ChEBI" id="CHEBI:17509"/>
        <dbReference type="ChEBI" id="CHEBI:28938"/>
        <dbReference type="ChEBI" id="CHEBI:48595"/>
        <dbReference type="EC" id="3.5.4.31"/>
    </reaction>
</comment>
<comment type="cofactor">
    <cofactor evidence="1">
        <name>Zn(2+)</name>
        <dbReference type="ChEBI" id="CHEBI:29105"/>
    </cofactor>
    <text evidence="1">Binds 1 zinc ion per subunit.</text>
</comment>
<comment type="similarity">
    <text evidence="1">Belongs to the metallo-dependent hydrolases superfamily. MTA/SAH deaminase family.</text>
</comment>
<feature type="chain" id="PRO_1000214206" description="5-methylthioadenosine/S-adenosylhomocysteine deaminase">
    <location>
        <begin position="1"/>
        <end position="442"/>
    </location>
</feature>
<feature type="binding site" evidence="1">
    <location>
        <position position="72"/>
    </location>
    <ligand>
        <name>Zn(2+)</name>
        <dbReference type="ChEBI" id="CHEBI:29105"/>
    </ligand>
</feature>
<feature type="binding site" evidence="1">
    <location>
        <position position="74"/>
    </location>
    <ligand>
        <name>Zn(2+)</name>
        <dbReference type="ChEBI" id="CHEBI:29105"/>
    </ligand>
</feature>
<feature type="binding site" evidence="1">
    <location>
        <position position="101"/>
    </location>
    <ligand>
        <name>substrate</name>
    </ligand>
</feature>
<feature type="binding site" evidence="1">
    <location>
        <position position="194"/>
    </location>
    <ligand>
        <name>substrate</name>
    </ligand>
</feature>
<feature type="binding site" evidence="1">
    <location>
        <position position="221"/>
    </location>
    <ligand>
        <name>Zn(2+)</name>
        <dbReference type="ChEBI" id="CHEBI:29105"/>
    </ligand>
</feature>
<feature type="binding site" evidence="1">
    <location>
        <position position="224"/>
    </location>
    <ligand>
        <name>substrate</name>
    </ligand>
</feature>
<feature type="binding site" evidence="1">
    <location>
        <position position="309"/>
    </location>
    <ligand>
        <name>substrate</name>
    </ligand>
</feature>
<feature type="binding site" evidence="1">
    <location>
        <position position="309"/>
    </location>
    <ligand>
        <name>Zn(2+)</name>
        <dbReference type="ChEBI" id="CHEBI:29105"/>
    </ligand>
</feature>
<proteinExistence type="inferred from homology"/>
<keyword id="KW-0378">Hydrolase</keyword>
<keyword id="KW-0479">Metal-binding</keyword>
<keyword id="KW-1185">Reference proteome</keyword>
<keyword id="KW-0862">Zinc</keyword>
<sequence>MTNTTTIDYSLDASWILPVVPHQRLFKDCSLLISRDRIHSIVPTSQSLRDYTVRERISLPGQLLMPGLINCHGHAAMTLLRGFADDMPLETWLKEHIWPVEAQWAGEEFVRDGGELAMAEMLLSGTTCFADMYFFGEALASAVHKAGMRAQLYFPIVDFATAWAQSPDEYIHKGLKLRDTYRSHPLINVHFGPHAPYTVGDAPLERIAVYADELHAQVHIHLHETPEEIESSIKEFGKRPLQRLADMGLLTPLTHCVHMTQTSAEDIALLANSGAHVIHCPRSNLKLASGSCPTAALTQQGVNVALGTDGAASNNSLDMFAELQAAALFGKLVAGDAAAIDAHSAIAMATINGAKAIGLEDQLGSLEPGKQADVIAIDMNDLDLQPVHNPVSQLVYTQMGHRVSNVWVAGEQLVKSRDLTTLSRKEIAANAAQWREKLGAKR</sequence>
<evidence type="ECO:0000255" key="1">
    <source>
        <dbReference type="HAMAP-Rule" id="MF_01281"/>
    </source>
</evidence>
<organism>
    <name type="scientific">Teredinibacter turnerae (strain ATCC 39867 / T7901)</name>
    <dbReference type="NCBI Taxonomy" id="377629"/>
    <lineage>
        <taxon>Bacteria</taxon>
        <taxon>Pseudomonadati</taxon>
        <taxon>Pseudomonadota</taxon>
        <taxon>Gammaproteobacteria</taxon>
        <taxon>Cellvibrionales</taxon>
        <taxon>Cellvibrionaceae</taxon>
        <taxon>Teredinibacter</taxon>
    </lineage>
</organism>
<name>MTAD_TERTT</name>
<dbReference type="EC" id="3.5.4.28" evidence="1"/>
<dbReference type="EC" id="3.5.4.31" evidence="1"/>
<dbReference type="EMBL" id="CP001614">
    <property type="protein sequence ID" value="ACR14255.1"/>
    <property type="molecule type" value="Genomic_DNA"/>
</dbReference>
<dbReference type="RefSeq" id="WP_015820371.1">
    <property type="nucleotide sequence ID" value="NC_012997.1"/>
</dbReference>
<dbReference type="SMR" id="C5BSJ0"/>
<dbReference type="STRING" id="377629.TERTU_1381"/>
<dbReference type="KEGG" id="ttu:TERTU_1381"/>
<dbReference type="eggNOG" id="COG0402">
    <property type="taxonomic scope" value="Bacteria"/>
</dbReference>
<dbReference type="HOGENOM" id="CLU_012358_2_1_6"/>
<dbReference type="OrthoDB" id="9807210at2"/>
<dbReference type="Proteomes" id="UP000009080">
    <property type="component" value="Chromosome"/>
</dbReference>
<dbReference type="GO" id="GO:0090614">
    <property type="term" value="F:5'-methylthioadenosine deaminase activity"/>
    <property type="evidence" value="ECO:0007669"/>
    <property type="project" value="UniProtKB-UniRule"/>
</dbReference>
<dbReference type="GO" id="GO:0046872">
    <property type="term" value="F:metal ion binding"/>
    <property type="evidence" value="ECO:0007669"/>
    <property type="project" value="UniProtKB-KW"/>
</dbReference>
<dbReference type="GO" id="GO:0050270">
    <property type="term" value="F:S-adenosylhomocysteine deaminase activity"/>
    <property type="evidence" value="ECO:0007669"/>
    <property type="project" value="UniProtKB-UniRule"/>
</dbReference>
<dbReference type="CDD" id="cd01298">
    <property type="entry name" value="ATZ_TRZ_like"/>
    <property type="match status" value="1"/>
</dbReference>
<dbReference type="FunFam" id="3.20.20.140:FF:000014">
    <property type="entry name" value="5-methylthioadenosine/S-adenosylhomocysteine deaminase"/>
    <property type="match status" value="1"/>
</dbReference>
<dbReference type="Gene3D" id="3.20.20.140">
    <property type="entry name" value="Metal-dependent hydrolases"/>
    <property type="match status" value="1"/>
</dbReference>
<dbReference type="Gene3D" id="2.30.40.10">
    <property type="entry name" value="Urease, subunit C, domain 1"/>
    <property type="match status" value="1"/>
</dbReference>
<dbReference type="HAMAP" id="MF_01281">
    <property type="entry name" value="MTA_SAH_deamin"/>
    <property type="match status" value="1"/>
</dbReference>
<dbReference type="InterPro" id="IPR006680">
    <property type="entry name" value="Amidohydro-rel"/>
</dbReference>
<dbReference type="InterPro" id="IPR023512">
    <property type="entry name" value="Deaminase_MtaD/DadD"/>
</dbReference>
<dbReference type="InterPro" id="IPR011059">
    <property type="entry name" value="Metal-dep_hydrolase_composite"/>
</dbReference>
<dbReference type="InterPro" id="IPR032466">
    <property type="entry name" value="Metal_Hydrolase"/>
</dbReference>
<dbReference type="InterPro" id="IPR050287">
    <property type="entry name" value="MTA/SAH_deaminase"/>
</dbReference>
<dbReference type="NCBIfam" id="NF006549">
    <property type="entry name" value="PRK09045.1"/>
    <property type="match status" value="1"/>
</dbReference>
<dbReference type="PANTHER" id="PTHR43794:SF11">
    <property type="entry name" value="AMIDOHYDROLASE-RELATED DOMAIN-CONTAINING PROTEIN"/>
    <property type="match status" value="1"/>
</dbReference>
<dbReference type="PANTHER" id="PTHR43794">
    <property type="entry name" value="AMINOHYDROLASE SSNA-RELATED"/>
    <property type="match status" value="1"/>
</dbReference>
<dbReference type="Pfam" id="PF01979">
    <property type="entry name" value="Amidohydro_1"/>
    <property type="match status" value="1"/>
</dbReference>
<dbReference type="SUPFAM" id="SSF51338">
    <property type="entry name" value="Composite domain of metallo-dependent hydrolases"/>
    <property type="match status" value="1"/>
</dbReference>
<dbReference type="SUPFAM" id="SSF51556">
    <property type="entry name" value="Metallo-dependent hydrolases"/>
    <property type="match status" value="1"/>
</dbReference>